<comment type="function">
    <text evidence="3">Removal of H(2)O(2), oxidation of toxic reductants, biosynthesis and degradation of lignin, suberization, auxin catabolism, response to environmental stresses such as wounding, pathogen attack and oxidative stress. These functions might be dependent on each isozyme/isoform in each plant tissue.</text>
</comment>
<comment type="catalytic activity">
    <reaction>
        <text>2 a phenolic donor + H2O2 = 2 a phenolic radical donor + 2 H2O</text>
        <dbReference type="Rhea" id="RHEA:56136"/>
        <dbReference type="ChEBI" id="CHEBI:15377"/>
        <dbReference type="ChEBI" id="CHEBI:16240"/>
        <dbReference type="ChEBI" id="CHEBI:139520"/>
        <dbReference type="ChEBI" id="CHEBI:139521"/>
        <dbReference type="EC" id="1.11.1.7"/>
    </reaction>
</comment>
<comment type="cofactor">
    <cofactor evidence="1 2">
        <name>Ca(2+)</name>
        <dbReference type="ChEBI" id="CHEBI:29108"/>
    </cofactor>
    <text evidence="1 2">Binds 2 calcium ions per subunit.</text>
</comment>
<comment type="cofactor">
    <cofactor evidence="1 2">
        <name>heme b</name>
        <dbReference type="ChEBI" id="CHEBI:60344"/>
    </cofactor>
    <text evidence="1 2">Binds 1 heme b (iron(II)-protoporphyrin IX) group per subunit.</text>
</comment>
<comment type="subcellular location">
    <subcellularLocation>
        <location evidence="1 2">Secreted</location>
    </subcellularLocation>
</comment>
<comment type="similarity">
    <text evidence="2">Belongs to the peroxidase family. Classical plant (class III) peroxidase subfamily.</text>
</comment>
<reference key="1">
    <citation type="journal article" date="2009" name="Physiol. Plantarum">
        <title>The presence of sinapyl lignin in Ginkgo biloba cell cultures changes our views of the evolution of lignin biosynthesis.</title>
        <authorList>
            <person name="Novo Uzal E."/>
            <person name="Gomez Ros L.V."/>
            <person name="Pomar F."/>
            <person name="Bernal M.A."/>
            <person name="Paradela A."/>
            <person name="Albar J.P."/>
            <person name="Ros Barcelo A."/>
        </authorList>
    </citation>
    <scope>PROTEIN SEQUENCE</scope>
    <source>
        <strain>PC-1121</strain>
        <tissue>Callus</tissue>
    </source>
</reference>
<evidence type="ECO:0000250" key="1">
    <source>
        <dbReference type="UniProtKB" id="P84516"/>
    </source>
</evidence>
<evidence type="ECO:0000255" key="2">
    <source>
        <dbReference type="PROSITE-ProRule" id="PRU00297"/>
    </source>
</evidence>
<evidence type="ECO:0000305" key="3"/>
<organism>
    <name type="scientific">Betula pendula</name>
    <name type="common">European white birch</name>
    <name type="synonym">Betula verrucosa</name>
    <dbReference type="NCBI Taxonomy" id="3505"/>
    <lineage>
        <taxon>Eukaryota</taxon>
        <taxon>Viridiplantae</taxon>
        <taxon>Streptophyta</taxon>
        <taxon>Embryophyta</taxon>
        <taxon>Tracheophyta</taxon>
        <taxon>Spermatophyta</taxon>
        <taxon>Magnoliopsida</taxon>
        <taxon>eudicotyledons</taxon>
        <taxon>Gunneridae</taxon>
        <taxon>Pentapetalae</taxon>
        <taxon>rosids</taxon>
        <taxon>fabids</taxon>
        <taxon>Fagales</taxon>
        <taxon>Betulaceae</taxon>
        <taxon>Betula</taxon>
    </lineage>
</organism>
<sequence length="9" mass="1007">GFDVIDTIK</sequence>
<dbReference type="EC" id="1.11.1.7"/>
<dbReference type="GO" id="GO:0005576">
    <property type="term" value="C:extracellular region"/>
    <property type="evidence" value="ECO:0007669"/>
    <property type="project" value="UniProtKB-SubCell"/>
</dbReference>
<dbReference type="GO" id="GO:0140825">
    <property type="term" value="F:lactoperoxidase activity"/>
    <property type="evidence" value="ECO:0007669"/>
    <property type="project" value="UniProtKB-EC"/>
</dbReference>
<dbReference type="GO" id="GO:0046872">
    <property type="term" value="F:metal ion binding"/>
    <property type="evidence" value="ECO:0007669"/>
    <property type="project" value="UniProtKB-KW"/>
</dbReference>
<dbReference type="GO" id="GO:0042744">
    <property type="term" value="P:hydrogen peroxide catabolic process"/>
    <property type="evidence" value="ECO:0007669"/>
    <property type="project" value="UniProtKB-KW"/>
</dbReference>
<accession>P85332</accession>
<keyword id="KW-0106">Calcium</keyword>
<keyword id="KW-0903">Direct protein sequencing</keyword>
<keyword id="KW-0349">Heme</keyword>
<keyword id="KW-0376">Hydrogen peroxide</keyword>
<keyword id="KW-0408">Iron</keyword>
<keyword id="KW-0479">Metal-binding</keyword>
<keyword id="KW-0560">Oxidoreductase</keyword>
<keyword id="KW-0575">Peroxidase</keyword>
<keyword id="KW-0964">Secreted</keyword>
<protein>
    <recommendedName>
        <fullName>Cationic peroxidase</fullName>
        <ecNumber>1.11.1.7</ecNumber>
    </recommendedName>
</protein>
<feature type="chain" id="PRO_0000314642" description="Cationic peroxidase">
    <location>
        <begin position="1" status="less than"/>
        <end position="9" status="greater than"/>
    </location>
</feature>
<feature type="non-terminal residue">
    <location>
        <position position="1"/>
    </location>
</feature>
<feature type="non-terminal residue">
    <location>
        <position position="9"/>
    </location>
</feature>
<proteinExistence type="evidence at protein level"/>
<name>PERC_BETPN</name>